<gene>
    <name type="primary">pgaA</name>
    <name type="synonym">ycdS</name>
    <name type="ordered locus">b1024</name>
    <name type="ordered locus">JW1010</name>
</gene>
<reference key="1">
    <citation type="journal article" date="1996" name="DNA Res.">
        <title>A 718-kb DNA sequence of the Escherichia coli K-12 genome corresponding to the 12.7-28.0 min region on the linkage map.</title>
        <authorList>
            <person name="Oshima T."/>
            <person name="Aiba H."/>
            <person name="Baba T."/>
            <person name="Fujita K."/>
            <person name="Hayashi K."/>
            <person name="Honjo A."/>
            <person name="Ikemoto K."/>
            <person name="Inada T."/>
            <person name="Itoh T."/>
            <person name="Kajihara M."/>
            <person name="Kanai K."/>
            <person name="Kashimoto K."/>
            <person name="Kimura S."/>
            <person name="Kitagawa M."/>
            <person name="Makino K."/>
            <person name="Masuda S."/>
            <person name="Miki T."/>
            <person name="Mizobuchi K."/>
            <person name="Mori H."/>
            <person name="Motomura K."/>
            <person name="Nakamura Y."/>
            <person name="Nashimoto H."/>
            <person name="Nishio Y."/>
            <person name="Saito N."/>
            <person name="Sampei G."/>
            <person name="Seki Y."/>
            <person name="Tagami H."/>
            <person name="Takemoto K."/>
            <person name="Wada C."/>
            <person name="Yamamoto Y."/>
            <person name="Yano M."/>
            <person name="Horiuchi T."/>
        </authorList>
    </citation>
    <scope>NUCLEOTIDE SEQUENCE [LARGE SCALE GENOMIC DNA]</scope>
    <source>
        <strain>K12 / W3110 / ATCC 27325 / DSM 5911</strain>
    </source>
</reference>
<reference key="2">
    <citation type="journal article" date="1997" name="Science">
        <title>The complete genome sequence of Escherichia coli K-12.</title>
        <authorList>
            <person name="Blattner F.R."/>
            <person name="Plunkett G. III"/>
            <person name="Bloch C.A."/>
            <person name="Perna N.T."/>
            <person name="Burland V."/>
            <person name="Riley M."/>
            <person name="Collado-Vides J."/>
            <person name="Glasner J.D."/>
            <person name="Rode C.K."/>
            <person name="Mayhew G.F."/>
            <person name="Gregor J."/>
            <person name="Davis N.W."/>
            <person name="Kirkpatrick H.A."/>
            <person name="Goeden M.A."/>
            <person name="Rose D.J."/>
            <person name="Mau B."/>
            <person name="Shao Y."/>
        </authorList>
    </citation>
    <scope>NUCLEOTIDE SEQUENCE [LARGE SCALE GENOMIC DNA]</scope>
    <source>
        <strain>K12 / MG1655 / ATCC 47076</strain>
    </source>
</reference>
<reference key="3">
    <citation type="journal article" date="2006" name="Mol. Syst. Biol.">
        <title>Highly accurate genome sequences of Escherichia coli K-12 strains MG1655 and W3110.</title>
        <authorList>
            <person name="Hayashi K."/>
            <person name="Morooka N."/>
            <person name="Yamamoto Y."/>
            <person name="Fujita K."/>
            <person name="Isono K."/>
            <person name="Choi S."/>
            <person name="Ohtsubo E."/>
            <person name="Baba T."/>
            <person name="Wanner B.L."/>
            <person name="Mori H."/>
            <person name="Horiuchi T."/>
        </authorList>
    </citation>
    <scope>NUCLEOTIDE SEQUENCE [LARGE SCALE GENOMIC DNA]</scope>
    <source>
        <strain>K12 / W3110 / ATCC 27325 / DSM 5911</strain>
    </source>
</reference>
<reference key="4">
    <citation type="journal article" date="2004" name="J. Bacteriol.">
        <title>The pgaABCD locus of Escherichia coli promotes the synthesis of a polysaccharide adhesin required for biofilm formation.</title>
        <authorList>
            <person name="Wang X."/>
            <person name="Preston J.F. III"/>
            <person name="Romeo T."/>
        </authorList>
    </citation>
    <scope>ROLE IN THE SYNTHESIS OF A BIOFILM POLYSACCHARIDE</scope>
    <scope>OPERON STRUCTURE</scope>
    <scope>DISRUPTION PHENOTYPE</scope>
    <source>
        <strain>K12 / MG1655 / ATCC 47076</strain>
    </source>
</reference>
<reference key="5">
    <citation type="journal article" date="2008" name="J. Bacteriol.">
        <title>Roles of pgaABCD genes in synthesis, modification, and export of the Escherichia coli biofilm adhesin poly-beta-1,6-N-acetyl-D-glucosamine.</title>
        <authorList>
            <person name="Itoh Y."/>
            <person name="Rice J.D."/>
            <person name="Goller C."/>
            <person name="Pannuri A."/>
            <person name="Taylor J."/>
            <person name="Meisner J."/>
            <person name="Beveridge T.J."/>
            <person name="Preston J.F. III"/>
            <person name="Romeo T."/>
        </authorList>
    </citation>
    <scope>FUNCTION IN PGA EXPORT</scope>
    <scope>DOMAIN</scope>
    <scope>SUBCELLULAR LOCATION</scope>
    <scope>DISRUPTION PHENOTYPE</scope>
    <source>
        <strain>K12 / MG1655 / ATCC 47076</strain>
    </source>
</reference>
<reference key="6">
    <citation type="journal article" date="2009" name="Mol. Microbiol.">
        <title>Second messenger signalling governs Escherichia coli biofilm induction upon ribosomal stress.</title>
        <authorList>
            <person name="Boehm A."/>
            <person name="Steiner S."/>
            <person name="Zaehringer F."/>
            <person name="Casanova A."/>
            <person name="Hamburger F."/>
            <person name="Ritz D."/>
            <person name="Keck W."/>
            <person name="Ackermann M."/>
            <person name="Schirmer T."/>
            <person name="Jenal U."/>
        </authorList>
    </citation>
    <scope>ROLE IN BIOFILM FORMATION</scope>
    <scope>INDUCTION</scope>
    <source>
        <strain>K12 / MG1655 / AB400</strain>
    </source>
</reference>
<name>PGAA_ECOLI</name>
<feature type="signal peptide" evidence="1">
    <location>
        <begin position="1"/>
        <end position="26"/>
    </location>
</feature>
<feature type="chain" id="PRO_0000035694" description="Poly-beta-1,6-N-acetyl-D-glucosamine export protein">
    <location>
        <begin position="27"/>
        <end position="807"/>
    </location>
</feature>
<feature type="repeat" description="TPR 1">
    <location>
        <begin position="98"/>
        <end position="131"/>
    </location>
</feature>
<feature type="repeat" description="TPR 2">
    <location>
        <begin position="165"/>
        <end position="198"/>
    </location>
</feature>
<feature type="repeat" description="TPR 3">
    <location>
        <begin position="279"/>
        <end position="311"/>
    </location>
</feature>
<feature type="strand" evidence="6">
    <location>
        <begin position="518"/>
        <end position="530"/>
    </location>
</feature>
<feature type="strand" evidence="6">
    <location>
        <begin position="540"/>
        <end position="547"/>
    </location>
</feature>
<feature type="strand" evidence="6">
    <location>
        <begin position="551"/>
        <end position="565"/>
    </location>
</feature>
<feature type="strand" evidence="6">
    <location>
        <begin position="574"/>
        <end position="586"/>
    </location>
</feature>
<feature type="strand" evidence="6">
    <location>
        <begin position="589"/>
        <end position="599"/>
    </location>
</feature>
<feature type="strand" evidence="6">
    <location>
        <begin position="604"/>
        <end position="617"/>
    </location>
</feature>
<feature type="strand" evidence="6">
    <location>
        <begin position="620"/>
        <end position="629"/>
    </location>
</feature>
<feature type="helix" evidence="6">
    <location>
        <begin position="638"/>
        <end position="640"/>
    </location>
</feature>
<feature type="strand" evidence="6">
    <location>
        <begin position="644"/>
        <end position="670"/>
    </location>
</feature>
<feature type="strand" evidence="6">
    <location>
        <begin position="675"/>
        <end position="689"/>
    </location>
</feature>
<feature type="strand" evidence="6">
    <location>
        <begin position="691"/>
        <end position="697"/>
    </location>
</feature>
<feature type="strand" evidence="6">
    <location>
        <begin position="700"/>
        <end position="705"/>
    </location>
</feature>
<feature type="strand" evidence="6">
    <location>
        <begin position="717"/>
        <end position="723"/>
    </location>
</feature>
<feature type="strand" evidence="6">
    <location>
        <begin position="725"/>
        <end position="735"/>
    </location>
</feature>
<feature type="strand" evidence="6">
    <location>
        <begin position="738"/>
        <end position="753"/>
    </location>
</feature>
<feature type="turn" evidence="6">
    <location>
        <begin position="754"/>
        <end position="756"/>
    </location>
</feature>
<feature type="strand" evidence="6">
    <location>
        <begin position="757"/>
        <end position="772"/>
    </location>
</feature>
<feature type="turn" evidence="6">
    <location>
        <begin position="773"/>
        <end position="775"/>
    </location>
</feature>
<feature type="strand" evidence="6">
    <location>
        <begin position="776"/>
        <end position="807"/>
    </location>
</feature>
<evidence type="ECO:0000255" key="1"/>
<evidence type="ECO:0000269" key="2">
    <source>
    </source>
</evidence>
<evidence type="ECO:0000269" key="3">
    <source>
    </source>
</evidence>
<evidence type="ECO:0000269" key="4">
    <source>
    </source>
</evidence>
<evidence type="ECO:0000305" key="5">
    <source>
    </source>
</evidence>
<evidence type="ECO:0007829" key="6">
    <source>
        <dbReference type="PDB" id="4Y25"/>
    </source>
</evidence>
<protein>
    <recommendedName>
        <fullName>Poly-beta-1,6-N-acetyl-D-glucosamine export protein</fullName>
        <shortName>PGA export protein</shortName>
        <shortName>Poly-beta-1,6-GlcNAc export protein</shortName>
    </recommendedName>
</protein>
<accession>P69434</accession>
<accession>P75907</accession>
<proteinExistence type="evidence at protein level"/>
<comment type="function">
    <text>Exports the biofilm adhesin polysaccharide poly-beta-1,6-N-acetyl-D-glucosamine (PGA) across the outer membrane. The PGA transported seems to be partially N-deacetylated since N-deacetylation of PGA by PgaB is needed for PGA export through the PgaA porin.</text>
</comment>
<comment type="function">
    <text>Required for the synthesis of the beta-1,6-GlcNAc polysaccharide (PGA or poly-GlcNAc) that seems to serve as a biofilm adhesin.</text>
</comment>
<comment type="subcellular location">
    <subcellularLocation>
        <location evidence="5">Cell outer membrane</location>
        <topology evidence="5">Multi-pass membrane protein</topology>
    </subcellularLocation>
</comment>
<comment type="induction">
    <text evidence="4">Levels of this protein are negatively controlled by the second messenger ppGpp (at protein level) at a post-transcriptional level. Increased levels of c-di-GMP lead to decreased levels of PgaA.</text>
</comment>
<comment type="domain">
    <text evidence="3">Contains a predicted C-terminal beta-barrel porin domain and a N-terminal periplasmic superhelical domain containing tetratricopeptide repeats, which may mediate protein-protein interactions, perhaps with PgaB.</text>
</comment>
<comment type="disruption phenotype">
    <text evidence="2 3">Deletion of pgaA does not prevent PGA synthesis but does block its export. The synthesized PGA is retained in the periplasm and accumulates at the cell poles. Disruption of the pga operon causes severe and persistent defects in the biofilm formation process.</text>
</comment>
<sequence length="807" mass="92207">MYSSSRKRCPKTKWALKLLTAAFLAASPAAKSAVNNAYDALIIEARKGNTQPALSWFALKSALSNNQIADWLQIALWAGQDKQVITVYNRYRHQQLPARGYAAVAVAYRNLQQWQNSLTLWQKALSLEPQNKDYQRGQILTLADAGHYDTALVKLKQLNSGAPDKANLLAEAYIYKLAGRHQDELRAMTESLPENASTQQYPTEYVQALRNNQLAAAIDDANLTPDIRADIHAELVRLSFMPTRSESERYAIADRALAQYAALEILWHDNPDRTAQYQRIQVDHLGALLTRDRYKDVISHYQRLKKTGQIIPPWGQYWVASAYLKDHQPKKAQSIMTELFYHKETIAPDLSDEELADLFYSHLESENYPGALTVTQHTINTSPPFLRLMGTPTSIPNDTWLQGHSFLSTVAKYSNDLPQAEMTARELAYNAPGNQGLRIDYASVLQARGWPRAAENELKKAEVIEPRNINLEVEQAWTALTLQEWQQAAVLTHDVVEREPQDPGVVRLKRAVDVHNLAELRIAGSTGIDAEGPDSGKHDVDLTTIVYSPPLKDNWRGFAGFGYADGQFSEGKGIVRDWLAGVEWRSRNIWLEAEYAERVFNHEHKPGARLSGWYDFNDNWRIGSQLERLSHRVPLRAMKNGVTGNSAQAYVRWYQNERRKYGVSWAFTDFSDSNQRHEVSLEGQERIWSSPYLIVDFLPSLYYEQNTEHDTPYYNPIKTFDIVPAFEASHLLWRSYENSWEQIFSAGVGASWQKHYGTDVVTQLGYGQRISWNDVIDAGATLRWEKRPYDGDREHNLYVEFDMTFRF</sequence>
<organism>
    <name type="scientific">Escherichia coli (strain K12)</name>
    <dbReference type="NCBI Taxonomy" id="83333"/>
    <lineage>
        <taxon>Bacteria</taxon>
        <taxon>Pseudomonadati</taxon>
        <taxon>Pseudomonadota</taxon>
        <taxon>Gammaproteobacteria</taxon>
        <taxon>Enterobacterales</taxon>
        <taxon>Enterobacteriaceae</taxon>
        <taxon>Escherichia</taxon>
    </lineage>
</organism>
<dbReference type="EMBL" id="U00096">
    <property type="protein sequence ID" value="AAC74109.1"/>
    <property type="molecule type" value="Genomic_DNA"/>
</dbReference>
<dbReference type="EMBL" id="AP009048">
    <property type="protein sequence ID" value="BAA35806.1"/>
    <property type="molecule type" value="Genomic_DNA"/>
</dbReference>
<dbReference type="PIR" id="F64844">
    <property type="entry name" value="F64844"/>
</dbReference>
<dbReference type="RefSeq" id="NP_415543.1">
    <property type="nucleotide sequence ID" value="NC_000913.3"/>
</dbReference>
<dbReference type="RefSeq" id="WP_000287458.1">
    <property type="nucleotide sequence ID" value="NZ_SSZK01000002.1"/>
</dbReference>
<dbReference type="PDB" id="4Y25">
    <property type="method" value="X-ray"/>
    <property type="resolution" value="2.82 A"/>
    <property type="chains" value="A=511-807"/>
</dbReference>
<dbReference type="PDB" id="7T8N">
    <property type="method" value="X-ray"/>
    <property type="resolution" value="2.85 A"/>
    <property type="chains" value="AAA/BBB=220-367"/>
</dbReference>
<dbReference type="PDBsum" id="4Y25"/>
<dbReference type="PDBsum" id="7T8N"/>
<dbReference type="SMR" id="P69434"/>
<dbReference type="BioGRID" id="4263226">
    <property type="interactions" value="123"/>
</dbReference>
<dbReference type="FunCoup" id="P69434">
    <property type="interactions" value="160"/>
</dbReference>
<dbReference type="IntAct" id="P69434">
    <property type="interactions" value="1"/>
</dbReference>
<dbReference type="STRING" id="511145.b1024"/>
<dbReference type="TCDB" id="1.B.55.1.1">
    <property type="family name" value="the poly acetyl glucosamine porin (pgaa) family"/>
</dbReference>
<dbReference type="PaxDb" id="511145-b1024"/>
<dbReference type="EnsemblBacteria" id="AAC74109">
    <property type="protein sequence ID" value="AAC74109"/>
    <property type="gene ID" value="b1024"/>
</dbReference>
<dbReference type="GeneID" id="945596"/>
<dbReference type="KEGG" id="ecj:JW1010"/>
<dbReference type="KEGG" id="eco:b1024"/>
<dbReference type="KEGG" id="ecoc:C3026_06225"/>
<dbReference type="PATRIC" id="fig|1411691.4.peg.1245"/>
<dbReference type="EchoBASE" id="EB3625"/>
<dbReference type="eggNOG" id="COG0457">
    <property type="taxonomic scope" value="Bacteria"/>
</dbReference>
<dbReference type="HOGENOM" id="CLU_018289_0_0_6"/>
<dbReference type="InParanoid" id="P69434"/>
<dbReference type="OMA" id="WDKRPYD"/>
<dbReference type="OrthoDB" id="5405060at2"/>
<dbReference type="BioCyc" id="EcoCyc:G6531-MONOMER"/>
<dbReference type="BioCyc" id="MetaCyc:G6531-MONOMER"/>
<dbReference type="BRENDA" id="3.1.1.58">
    <property type="organism ID" value="2026"/>
</dbReference>
<dbReference type="PRO" id="PR:P69434"/>
<dbReference type="Proteomes" id="UP000000625">
    <property type="component" value="Chromosome"/>
</dbReference>
<dbReference type="GO" id="GO:0009279">
    <property type="term" value="C:cell outer membrane"/>
    <property type="evidence" value="ECO:0007669"/>
    <property type="project" value="UniProtKB-SubCell"/>
</dbReference>
<dbReference type="GO" id="GO:1901515">
    <property type="term" value="F:poly-beta-1,6-N-acetyl-D-glucosamine transmembrane transporter activity"/>
    <property type="evidence" value="ECO:0007669"/>
    <property type="project" value="InterPro"/>
</dbReference>
<dbReference type="GO" id="GO:0015159">
    <property type="term" value="F:polysaccharide transmembrane transporter activity"/>
    <property type="evidence" value="ECO:0000314"/>
    <property type="project" value="EcoCyc"/>
</dbReference>
<dbReference type="GO" id="GO:0015774">
    <property type="term" value="P:polysaccharide transport"/>
    <property type="evidence" value="ECO:0000314"/>
    <property type="project" value="EcoCyc"/>
</dbReference>
<dbReference type="GO" id="GO:0044010">
    <property type="term" value="P:single-species biofilm formation"/>
    <property type="evidence" value="ECO:0000315"/>
    <property type="project" value="EcoCyc"/>
</dbReference>
<dbReference type="FunFam" id="1.25.40.10:FF:000337">
    <property type="entry name" value="Poly-beta-1,6 N-acetyl-D-glucosamine export porin PgaA"/>
    <property type="match status" value="1"/>
</dbReference>
<dbReference type="Gene3D" id="1.25.40.10">
    <property type="entry name" value="Tetratricopeptide repeat domain"/>
    <property type="match status" value="2"/>
</dbReference>
<dbReference type="InterPro" id="IPR023870">
    <property type="entry name" value="PGA_export_porin_PgaA"/>
</dbReference>
<dbReference type="InterPro" id="IPR049003">
    <property type="entry name" value="PgaA_barrel"/>
</dbReference>
<dbReference type="InterPro" id="IPR011990">
    <property type="entry name" value="TPR-like_helical_dom_sf"/>
</dbReference>
<dbReference type="InterPro" id="IPR019734">
    <property type="entry name" value="TPR_rpt"/>
</dbReference>
<dbReference type="NCBIfam" id="TIGR03939">
    <property type="entry name" value="PGA_TPR_OMP"/>
    <property type="match status" value="1"/>
</dbReference>
<dbReference type="NCBIfam" id="NF007468">
    <property type="entry name" value="PRK10049.1"/>
    <property type="match status" value="1"/>
</dbReference>
<dbReference type="Pfam" id="PF21197">
    <property type="entry name" value="PgaA_barrel"/>
    <property type="match status" value="1"/>
</dbReference>
<dbReference type="SMART" id="SM00028">
    <property type="entry name" value="TPR"/>
    <property type="match status" value="1"/>
</dbReference>
<dbReference type="SUPFAM" id="SSF48452">
    <property type="entry name" value="TPR-like"/>
    <property type="match status" value="2"/>
</dbReference>
<dbReference type="PROSITE" id="PS50005">
    <property type="entry name" value="TPR"/>
    <property type="match status" value="1"/>
</dbReference>
<dbReference type="PROSITE" id="PS50293">
    <property type="entry name" value="TPR_REGION"/>
    <property type="match status" value="1"/>
</dbReference>
<keyword id="KW-0002">3D-structure</keyword>
<keyword id="KW-0998">Cell outer membrane</keyword>
<keyword id="KW-0472">Membrane</keyword>
<keyword id="KW-1185">Reference proteome</keyword>
<keyword id="KW-0677">Repeat</keyword>
<keyword id="KW-0732">Signal</keyword>
<keyword id="KW-0802">TPR repeat</keyword>
<keyword id="KW-0812">Transmembrane</keyword>
<keyword id="KW-1134">Transmembrane beta strand</keyword>
<keyword id="KW-0813">Transport</keyword>